<name>PGA43_CANAL</name>
<keyword id="KW-1003">Cell membrane</keyword>
<keyword id="KW-0325">Glycoprotein</keyword>
<keyword id="KW-0336">GPI-anchor</keyword>
<keyword id="KW-0449">Lipoprotein</keyword>
<keyword id="KW-0472">Membrane</keyword>
<keyword id="KW-1185">Reference proteome</keyword>
<keyword id="KW-0732">Signal</keyword>
<dbReference type="EMBL" id="CP017626">
    <property type="protein sequence ID" value="AOW29352.1"/>
    <property type="molecule type" value="Genomic_DNA"/>
</dbReference>
<dbReference type="RefSeq" id="XP_715565.1">
    <property type="nucleotide sequence ID" value="XM_710472.1"/>
</dbReference>
<dbReference type="STRING" id="237561.Q5A1A9"/>
<dbReference type="GlyCosmos" id="Q5A1A9">
    <property type="glycosylation" value="3 sites, No reported glycans"/>
</dbReference>
<dbReference type="EnsemblFungi" id="C4_06260W_A-T">
    <property type="protein sequence ID" value="C4_06260W_A-T-p1"/>
    <property type="gene ID" value="C4_06260W_A"/>
</dbReference>
<dbReference type="GeneID" id="3642804"/>
<dbReference type="KEGG" id="cal:CAALFM_C406260WA"/>
<dbReference type="CGD" id="CAL0000197415">
    <property type="gene designation" value="PGA43"/>
</dbReference>
<dbReference type="VEuPathDB" id="FungiDB:C4_06260W_A"/>
<dbReference type="HOGENOM" id="CLU_101463_0_0_1"/>
<dbReference type="InParanoid" id="Q5A1A9"/>
<dbReference type="OMA" id="CCNELLH"/>
<dbReference type="OrthoDB" id="4087523at2759"/>
<dbReference type="PRO" id="PR:Q5A1A9"/>
<dbReference type="Proteomes" id="UP000000559">
    <property type="component" value="Chromosome 4"/>
</dbReference>
<dbReference type="GO" id="GO:0005886">
    <property type="term" value="C:plasma membrane"/>
    <property type="evidence" value="ECO:0007669"/>
    <property type="project" value="UniProtKB-SubCell"/>
</dbReference>
<dbReference type="GO" id="GO:0098552">
    <property type="term" value="C:side of membrane"/>
    <property type="evidence" value="ECO:0007669"/>
    <property type="project" value="UniProtKB-KW"/>
</dbReference>
<evidence type="ECO:0000255" key="1"/>
<evidence type="ECO:0000305" key="2"/>
<comment type="subcellular location">
    <subcellularLocation>
        <location evidence="2">Cell membrane</location>
        <topology evidence="2">Lipid-anchor</topology>
        <topology evidence="2">GPI-anchor</topology>
    </subcellularLocation>
</comment>
<accession>Q5A1A9</accession>
<accession>A0A1D8PMI7</accession>
<organism>
    <name type="scientific">Candida albicans (strain SC5314 / ATCC MYA-2876)</name>
    <name type="common">Yeast</name>
    <dbReference type="NCBI Taxonomy" id="237561"/>
    <lineage>
        <taxon>Eukaryota</taxon>
        <taxon>Fungi</taxon>
        <taxon>Dikarya</taxon>
        <taxon>Ascomycota</taxon>
        <taxon>Saccharomycotina</taxon>
        <taxon>Pichiomycetes</taxon>
        <taxon>Debaryomycetaceae</taxon>
        <taxon>Candida/Lodderomyces clade</taxon>
        <taxon>Candida</taxon>
    </lineage>
</organism>
<protein>
    <recommendedName>
        <fullName>Predicted GPI-anchored protein 43</fullName>
    </recommendedName>
</protein>
<gene>
    <name type="primary">PGA43</name>
    <name type="ordered locus">CAALFM_C406260WA</name>
    <name type="ORF">CaO19.10428</name>
    <name type="ORF">CaO19.2910</name>
</gene>
<feature type="signal peptide" evidence="1">
    <location>
        <begin position="1"/>
        <end position="24"/>
    </location>
</feature>
<feature type="chain" id="PRO_0000424945" description="Predicted GPI-anchored protein 43">
    <location>
        <begin position="25"/>
        <end position="208"/>
    </location>
</feature>
<feature type="propeptide" id="PRO_0000424946" description="Removed in mature form" evidence="1">
    <location>
        <begin position="209"/>
        <end position="236"/>
    </location>
</feature>
<feature type="lipid moiety-binding region" description="GPI-anchor amidated glycine" evidence="1">
    <location>
        <position position="208"/>
    </location>
</feature>
<feature type="glycosylation site" description="N-linked (GlcNAc...) asparagine" evidence="1">
    <location>
        <position position="192"/>
    </location>
</feature>
<feature type="glycosylation site" description="N-linked (GlcNAc...) asparagine" evidence="1">
    <location>
        <position position="195"/>
    </location>
</feature>
<feature type="glycosylation site" description="N-linked (GlcNAc...) asparagine" evidence="1">
    <location>
        <position position="198"/>
    </location>
</feature>
<reference key="1">
    <citation type="journal article" date="2004" name="Proc. Natl. Acad. Sci. U.S.A.">
        <title>The diploid genome sequence of Candida albicans.</title>
        <authorList>
            <person name="Jones T."/>
            <person name="Federspiel N.A."/>
            <person name="Chibana H."/>
            <person name="Dungan J."/>
            <person name="Kalman S."/>
            <person name="Magee B.B."/>
            <person name="Newport G."/>
            <person name="Thorstenson Y.R."/>
            <person name="Agabian N."/>
            <person name="Magee P.T."/>
            <person name="Davis R.W."/>
            <person name="Scherer S."/>
        </authorList>
    </citation>
    <scope>NUCLEOTIDE SEQUENCE [LARGE SCALE GENOMIC DNA]</scope>
    <source>
        <strain>SC5314 / ATCC MYA-2876</strain>
    </source>
</reference>
<reference key="2">
    <citation type="journal article" date="2007" name="Genome Biol.">
        <title>Assembly of the Candida albicans genome into sixteen supercontigs aligned on the eight chromosomes.</title>
        <authorList>
            <person name="van het Hoog M."/>
            <person name="Rast T.J."/>
            <person name="Martchenko M."/>
            <person name="Grindle S."/>
            <person name="Dignard D."/>
            <person name="Hogues H."/>
            <person name="Cuomo C."/>
            <person name="Berriman M."/>
            <person name="Scherer S."/>
            <person name="Magee B.B."/>
            <person name="Whiteway M."/>
            <person name="Chibana H."/>
            <person name="Nantel A."/>
            <person name="Magee P.T."/>
        </authorList>
    </citation>
    <scope>GENOME REANNOTATION</scope>
    <source>
        <strain>SC5314 / ATCC MYA-2876</strain>
    </source>
</reference>
<reference key="3">
    <citation type="journal article" date="2013" name="Genome Biol.">
        <title>Assembly of a phased diploid Candida albicans genome facilitates allele-specific measurements and provides a simple model for repeat and indel structure.</title>
        <authorList>
            <person name="Muzzey D."/>
            <person name="Schwartz K."/>
            <person name="Weissman J.S."/>
            <person name="Sherlock G."/>
        </authorList>
    </citation>
    <scope>NUCLEOTIDE SEQUENCE [LARGE SCALE GENOMIC DNA]</scope>
    <scope>GENOME REANNOTATION</scope>
    <source>
        <strain>SC5314 / ATCC MYA-2876</strain>
    </source>
</reference>
<reference key="4">
    <citation type="journal article" date="2003" name="Yeast">
        <title>Genome-wide identification of fungal GPI proteins.</title>
        <authorList>
            <person name="De Groot P.W."/>
            <person name="Hellingwerf K.J."/>
            <person name="Klis F.M."/>
        </authorList>
    </citation>
    <scope>PREDICTION OF GPI-ANCHOR</scope>
</reference>
<proteinExistence type="evidence at protein level"/>
<sequence length="236" mass="26292">MHQRNHHSILLTLLLYLQSIVALARIIDPEFGTYSNPNPRKYPQCQANDLVKLSSCCNELLHKLDQCKSDDLACECCALQSIDRDCYHLCPGNPSTNFLTVLLQDCAQLSEINACALPFKKTDDLLVDKKKGTPNSKSAVQALEADEKYDASLKSKVHNKVDEIKSHVKQDQFLKKKIKLLIDKDETFAIQNHSNNSNNTISAKSESGSVCLTSSYLNSPIIILCAILTGTLFAMY</sequence>